<proteinExistence type="inferred from homology"/>
<evidence type="ECO:0000255" key="1">
    <source>
        <dbReference type="HAMAP-Rule" id="MF_00235"/>
    </source>
</evidence>
<keyword id="KW-0067">ATP-binding</keyword>
<keyword id="KW-0963">Cytoplasm</keyword>
<keyword id="KW-0418">Kinase</keyword>
<keyword id="KW-0479">Metal-binding</keyword>
<keyword id="KW-0545">Nucleotide biosynthesis</keyword>
<keyword id="KW-0547">Nucleotide-binding</keyword>
<keyword id="KW-1185">Reference proteome</keyword>
<keyword id="KW-0808">Transferase</keyword>
<keyword id="KW-0862">Zinc</keyword>
<accession>A5I7I5</accession>
<accession>A7G8R7</accession>
<name>KAD_CLOBH</name>
<sequence length="216" mass="24134">MRIILLGPPGAGKGTQAKLISEEFSIPHISTGDIFRANIKEKTPLGIEAKRYIDNGQLVPDEVTIGIVKDRLTKDDCDNGFLLDGFPRTVAQAEALDEFLKGINKELDVALLIKVPEEFILERMTGRRVCTSCGASYHIRFNPPKIEGKCDICDNELIQRKDDTEATVKERLEVYSKQTYPLINYYKDNGIISEVNGTESINEVFGNISNILGRDK</sequence>
<feature type="chain" id="PRO_1000021719" description="Adenylate kinase">
    <location>
        <begin position="1"/>
        <end position="216"/>
    </location>
</feature>
<feature type="region of interest" description="NMP" evidence="1">
    <location>
        <begin position="30"/>
        <end position="59"/>
    </location>
</feature>
<feature type="region of interest" description="LID" evidence="1">
    <location>
        <begin position="126"/>
        <end position="163"/>
    </location>
</feature>
<feature type="binding site" evidence="1">
    <location>
        <begin position="10"/>
        <end position="15"/>
    </location>
    <ligand>
        <name>ATP</name>
        <dbReference type="ChEBI" id="CHEBI:30616"/>
    </ligand>
</feature>
<feature type="binding site" evidence="1">
    <location>
        <position position="31"/>
    </location>
    <ligand>
        <name>AMP</name>
        <dbReference type="ChEBI" id="CHEBI:456215"/>
    </ligand>
</feature>
<feature type="binding site" evidence="1">
    <location>
        <position position="36"/>
    </location>
    <ligand>
        <name>AMP</name>
        <dbReference type="ChEBI" id="CHEBI:456215"/>
    </ligand>
</feature>
<feature type="binding site" evidence="1">
    <location>
        <begin position="57"/>
        <end position="59"/>
    </location>
    <ligand>
        <name>AMP</name>
        <dbReference type="ChEBI" id="CHEBI:456215"/>
    </ligand>
</feature>
<feature type="binding site" evidence="1">
    <location>
        <begin position="85"/>
        <end position="88"/>
    </location>
    <ligand>
        <name>AMP</name>
        <dbReference type="ChEBI" id="CHEBI:456215"/>
    </ligand>
</feature>
<feature type="binding site" evidence="1">
    <location>
        <position position="92"/>
    </location>
    <ligand>
        <name>AMP</name>
        <dbReference type="ChEBI" id="CHEBI:456215"/>
    </ligand>
</feature>
<feature type="binding site" evidence="1">
    <location>
        <position position="127"/>
    </location>
    <ligand>
        <name>ATP</name>
        <dbReference type="ChEBI" id="CHEBI:30616"/>
    </ligand>
</feature>
<feature type="binding site" evidence="1">
    <location>
        <position position="130"/>
    </location>
    <ligand>
        <name>Zn(2+)</name>
        <dbReference type="ChEBI" id="CHEBI:29105"/>
        <note>structural</note>
    </ligand>
</feature>
<feature type="binding site" evidence="1">
    <location>
        <position position="133"/>
    </location>
    <ligand>
        <name>Zn(2+)</name>
        <dbReference type="ChEBI" id="CHEBI:29105"/>
        <note>structural</note>
    </ligand>
</feature>
<feature type="binding site" evidence="1">
    <location>
        <begin position="136"/>
        <end position="137"/>
    </location>
    <ligand>
        <name>ATP</name>
        <dbReference type="ChEBI" id="CHEBI:30616"/>
    </ligand>
</feature>
<feature type="binding site" evidence="1">
    <location>
        <position position="150"/>
    </location>
    <ligand>
        <name>Zn(2+)</name>
        <dbReference type="ChEBI" id="CHEBI:29105"/>
        <note>structural</note>
    </ligand>
</feature>
<feature type="binding site" evidence="1">
    <location>
        <position position="153"/>
    </location>
    <ligand>
        <name>Zn(2+)</name>
        <dbReference type="ChEBI" id="CHEBI:29105"/>
        <note>structural</note>
    </ligand>
</feature>
<feature type="binding site" evidence="1">
    <location>
        <position position="160"/>
    </location>
    <ligand>
        <name>AMP</name>
        <dbReference type="ChEBI" id="CHEBI:456215"/>
    </ligand>
</feature>
<feature type="binding site" evidence="1">
    <location>
        <position position="171"/>
    </location>
    <ligand>
        <name>AMP</name>
        <dbReference type="ChEBI" id="CHEBI:456215"/>
    </ligand>
</feature>
<feature type="binding site" evidence="1">
    <location>
        <position position="199"/>
    </location>
    <ligand>
        <name>ATP</name>
        <dbReference type="ChEBI" id="CHEBI:30616"/>
    </ligand>
</feature>
<comment type="function">
    <text evidence="1">Catalyzes the reversible transfer of the terminal phosphate group between ATP and AMP. Plays an important role in cellular energy homeostasis and in adenine nucleotide metabolism.</text>
</comment>
<comment type="catalytic activity">
    <reaction evidence="1">
        <text>AMP + ATP = 2 ADP</text>
        <dbReference type="Rhea" id="RHEA:12973"/>
        <dbReference type="ChEBI" id="CHEBI:30616"/>
        <dbReference type="ChEBI" id="CHEBI:456215"/>
        <dbReference type="ChEBI" id="CHEBI:456216"/>
        <dbReference type="EC" id="2.7.4.3"/>
    </reaction>
</comment>
<comment type="pathway">
    <text evidence="1">Purine metabolism; AMP biosynthesis via salvage pathway; AMP from ADP: step 1/1.</text>
</comment>
<comment type="subunit">
    <text evidence="1">Monomer.</text>
</comment>
<comment type="subcellular location">
    <subcellularLocation>
        <location evidence="1">Cytoplasm</location>
    </subcellularLocation>
</comment>
<comment type="domain">
    <text evidence="1">Consists of three domains, a large central CORE domain and two small peripheral domains, NMPbind and LID, which undergo movements during catalysis. The LID domain closes over the site of phosphoryl transfer upon ATP binding. Assembling and dissambling the active center during each catalytic cycle provides an effective means to prevent ATP hydrolysis. Some bacteria have evolved a zinc-coordinating structure that stabilizes the LID domain.</text>
</comment>
<comment type="similarity">
    <text evidence="1">Belongs to the adenylate kinase family.</text>
</comment>
<gene>
    <name evidence="1" type="primary">adk</name>
    <name type="ordered locus">CBO3460</name>
    <name type="ordered locus">CLC_3404</name>
</gene>
<reference key="1">
    <citation type="journal article" date="2007" name="Genome Res.">
        <title>Genome sequence of a proteolytic (Group I) Clostridium botulinum strain Hall A and comparative analysis of the clostridial genomes.</title>
        <authorList>
            <person name="Sebaihia M."/>
            <person name="Peck M.W."/>
            <person name="Minton N.P."/>
            <person name="Thomson N.R."/>
            <person name="Holden M.T.G."/>
            <person name="Mitchell W.J."/>
            <person name="Carter A.T."/>
            <person name="Bentley S.D."/>
            <person name="Mason D.R."/>
            <person name="Crossman L."/>
            <person name="Paul C.J."/>
            <person name="Ivens A."/>
            <person name="Wells-Bennik M.H.J."/>
            <person name="Davis I.J."/>
            <person name="Cerdeno-Tarraga A.M."/>
            <person name="Churcher C."/>
            <person name="Quail M.A."/>
            <person name="Chillingworth T."/>
            <person name="Feltwell T."/>
            <person name="Fraser A."/>
            <person name="Goodhead I."/>
            <person name="Hance Z."/>
            <person name="Jagels K."/>
            <person name="Larke N."/>
            <person name="Maddison M."/>
            <person name="Moule S."/>
            <person name="Mungall K."/>
            <person name="Norbertczak H."/>
            <person name="Rabbinowitsch E."/>
            <person name="Sanders M."/>
            <person name="Simmonds M."/>
            <person name="White B."/>
            <person name="Whithead S."/>
            <person name="Parkhill J."/>
        </authorList>
    </citation>
    <scope>NUCLEOTIDE SEQUENCE [LARGE SCALE GENOMIC DNA]</scope>
    <source>
        <strain>Hall / ATCC 3502 / NCTC 13319 / Type A</strain>
    </source>
</reference>
<reference key="2">
    <citation type="journal article" date="2007" name="PLoS ONE">
        <title>Analysis of the neurotoxin complex genes in Clostridium botulinum A1-A4 and B1 strains: BoNT/A3, /Ba4 and /B1 clusters are located within plasmids.</title>
        <authorList>
            <person name="Smith T.J."/>
            <person name="Hill K.K."/>
            <person name="Foley B.T."/>
            <person name="Detter J.C."/>
            <person name="Munk A.C."/>
            <person name="Bruce D.C."/>
            <person name="Doggett N.A."/>
            <person name="Smith L.A."/>
            <person name="Marks J.D."/>
            <person name="Xie G."/>
            <person name="Brettin T.S."/>
        </authorList>
    </citation>
    <scope>NUCLEOTIDE SEQUENCE [LARGE SCALE GENOMIC DNA]</scope>
    <source>
        <strain>Hall / ATCC 3502 / NCTC 13319 / Type A</strain>
    </source>
</reference>
<organism>
    <name type="scientific">Clostridium botulinum (strain Hall / ATCC 3502 / NCTC 13319 / Type A)</name>
    <dbReference type="NCBI Taxonomy" id="441771"/>
    <lineage>
        <taxon>Bacteria</taxon>
        <taxon>Bacillati</taxon>
        <taxon>Bacillota</taxon>
        <taxon>Clostridia</taxon>
        <taxon>Eubacteriales</taxon>
        <taxon>Clostridiaceae</taxon>
        <taxon>Clostridium</taxon>
    </lineage>
</organism>
<protein>
    <recommendedName>
        <fullName evidence="1">Adenylate kinase</fullName>
        <shortName evidence="1">AK</shortName>
        <ecNumber evidence="1">2.7.4.3</ecNumber>
    </recommendedName>
    <alternativeName>
        <fullName evidence="1">ATP-AMP transphosphorylase</fullName>
    </alternativeName>
    <alternativeName>
        <fullName evidence="1">ATP:AMP phosphotransferase</fullName>
    </alternativeName>
    <alternativeName>
        <fullName evidence="1">Adenylate monophosphate kinase</fullName>
    </alternativeName>
</protein>
<dbReference type="EC" id="2.7.4.3" evidence="1"/>
<dbReference type="EMBL" id="CP000727">
    <property type="protein sequence ID" value="ABS38938.1"/>
    <property type="molecule type" value="Genomic_DNA"/>
</dbReference>
<dbReference type="EMBL" id="AM412317">
    <property type="protein sequence ID" value="CAL85020.1"/>
    <property type="molecule type" value="Genomic_DNA"/>
</dbReference>
<dbReference type="RefSeq" id="WP_003357697.1">
    <property type="nucleotide sequence ID" value="NC_009698.1"/>
</dbReference>
<dbReference type="RefSeq" id="YP_001255941.1">
    <property type="nucleotide sequence ID" value="NC_009495.1"/>
</dbReference>
<dbReference type="RefSeq" id="YP_001389182.1">
    <property type="nucleotide sequence ID" value="NC_009698.1"/>
</dbReference>
<dbReference type="SMR" id="A5I7I5"/>
<dbReference type="GeneID" id="5186763"/>
<dbReference type="KEGG" id="cbh:CLC_3404"/>
<dbReference type="KEGG" id="cbo:CBO3460"/>
<dbReference type="PATRIC" id="fig|413999.7.peg.3436"/>
<dbReference type="HOGENOM" id="CLU_032354_1_2_9"/>
<dbReference type="UniPathway" id="UPA00588">
    <property type="reaction ID" value="UER00649"/>
</dbReference>
<dbReference type="PRO" id="PR:A5I7I5"/>
<dbReference type="Proteomes" id="UP000001986">
    <property type="component" value="Chromosome"/>
</dbReference>
<dbReference type="GO" id="GO:0005737">
    <property type="term" value="C:cytoplasm"/>
    <property type="evidence" value="ECO:0000318"/>
    <property type="project" value="GO_Central"/>
</dbReference>
<dbReference type="GO" id="GO:0005829">
    <property type="term" value="C:cytosol"/>
    <property type="evidence" value="ECO:0000318"/>
    <property type="project" value="GO_Central"/>
</dbReference>
<dbReference type="GO" id="GO:0004017">
    <property type="term" value="F:adenylate kinase activity"/>
    <property type="evidence" value="ECO:0000318"/>
    <property type="project" value="GO_Central"/>
</dbReference>
<dbReference type="GO" id="GO:0005524">
    <property type="term" value="F:ATP binding"/>
    <property type="evidence" value="ECO:0007669"/>
    <property type="project" value="UniProtKB-UniRule"/>
</dbReference>
<dbReference type="GO" id="GO:0004550">
    <property type="term" value="F:nucleoside diphosphate kinase activity"/>
    <property type="evidence" value="ECO:0000318"/>
    <property type="project" value="GO_Central"/>
</dbReference>
<dbReference type="GO" id="GO:0008270">
    <property type="term" value="F:zinc ion binding"/>
    <property type="evidence" value="ECO:0007669"/>
    <property type="project" value="UniProtKB-UniRule"/>
</dbReference>
<dbReference type="GO" id="GO:0044209">
    <property type="term" value="P:AMP salvage"/>
    <property type="evidence" value="ECO:0007669"/>
    <property type="project" value="UniProtKB-UniRule"/>
</dbReference>
<dbReference type="GO" id="GO:0009132">
    <property type="term" value="P:nucleoside diphosphate metabolic process"/>
    <property type="evidence" value="ECO:0000318"/>
    <property type="project" value="GO_Central"/>
</dbReference>
<dbReference type="GO" id="GO:0009123">
    <property type="term" value="P:nucleoside monophosphate metabolic process"/>
    <property type="evidence" value="ECO:0000318"/>
    <property type="project" value="GO_Central"/>
</dbReference>
<dbReference type="CDD" id="cd01428">
    <property type="entry name" value="ADK"/>
    <property type="match status" value="1"/>
</dbReference>
<dbReference type="FunFam" id="3.40.50.300:FF:000106">
    <property type="entry name" value="Adenylate kinase mitochondrial"/>
    <property type="match status" value="1"/>
</dbReference>
<dbReference type="Gene3D" id="3.40.50.300">
    <property type="entry name" value="P-loop containing nucleotide triphosphate hydrolases"/>
    <property type="match status" value="1"/>
</dbReference>
<dbReference type="HAMAP" id="MF_00235">
    <property type="entry name" value="Adenylate_kinase_Adk"/>
    <property type="match status" value="1"/>
</dbReference>
<dbReference type="InterPro" id="IPR006259">
    <property type="entry name" value="Adenyl_kin_sub"/>
</dbReference>
<dbReference type="InterPro" id="IPR000850">
    <property type="entry name" value="Adenylat/UMP-CMP_kin"/>
</dbReference>
<dbReference type="InterPro" id="IPR033690">
    <property type="entry name" value="Adenylat_kinase_CS"/>
</dbReference>
<dbReference type="InterPro" id="IPR007862">
    <property type="entry name" value="Adenylate_kinase_lid-dom"/>
</dbReference>
<dbReference type="InterPro" id="IPR027417">
    <property type="entry name" value="P-loop_NTPase"/>
</dbReference>
<dbReference type="NCBIfam" id="TIGR01351">
    <property type="entry name" value="adk"/>
    <property type="match status" value="1"/>
</dbReference>
<dbReference type="NCBIfam" id="NF001379">
    <property type="entry name" value="PRK00279.1-1"/>
    <property type="match status" value="1"/>
</dbReference>
<dbReference type="NCBIfam" id="NF001380">
    <property type="entry name" value="PRK00279.1-2"/>
    <property type="match status" value="1"/>
</dbReference>
<dbReference type="NCBIfam" id="NF001381">
    <property type="entry name" value="PRK00279.1-3"/>
    <property type="match status" value="1"/>
</dbReference>
<dbReference type="NCBIfam" id="NF011100">
    <property type="entry name" value="PRK14527.1"/>
    <property type="match status" value="1"/>
</dbReference>
<dbReference type="PANTHER" id="PTHR23359">
    <property type="entry name" value="NUCLEOTIDE KINASE"/>
    <property type="match status" value="1"/>
</dbReference>
<dbReference type="Pfam" id="PF00406">
    <property type="entry name" value="ADK"/>
    <property type="match status" value="1"/>
</dbReference>
<dbReference type="Pfam" id="PF05191">
    <property type="entry name" value="ADK_lid"/>
    <property type="match status" value="1"/>
</dbReference>
<dbReference type="PRINTS" id="PR00094">
    <property type="entry name" value="ADENYLTKNASE"/>
</dbReference>
<dbReference type="SUPFAM" id="SSF52540">
    <property type="entry name" value="P-loop containing nucleoside triphosphate hydrolases"/>
    <property type="match status" value="1"/>
</dbReference>
<dbReference type="PROSITE" id="PS00113">
    <property type="entry name" value="ADENYLATE_KINASE"/>
    <property type="match status" value="1"/>
</dbReference>